<accession>Q02R28</accession>
<name>ARNE_PSEAB</name>
<dbReference type="EMBL" id="CP000438">
    <property type="protein sequence ID" value="ABJ12791.1"/>
    <property type="molecule type" value="Genomic_DNA"/>
</dbReference>
<dbReference type="RefSeq" id="WP_003138076.1">
    <property type="nucleotide sequence ID" value="NZ_CP034244.1"/>
</dbReference>
<dbReference type="SMR" id="Q02R28"/>
<dbReference type="KEGG" id="pau:PA14_18320"/>
<dbReference type="PseudoCAP" id="PA14_18320"/>
<dbReference type="HOGENOM" id="CLU_131462_5_1_6"/>
<dbReference type="BioCyc" id="PAER208963:G1G74-1511-MONOMER"/>
<dbReference type="UniPathway" id="UPA00030"/>
<dbReference type="Proteomes" id="UP000000653">
    <property type="component" value="Chromosome"/>
</dbReference>
<dbReference type="GO" id="GO:0005886">
    <property type="term" value="C:plasma membrane"/>
    <property type="evidence" value="ECO:0007669"/>
    <property type="project" value="UniProtKB-SubCell"/>
</dbReference>
<dbReference type="GO" id="GO:1901505">
    <property type="term" value="F:carbohydrate derivative transmembrane transporter activity"/>
    <property type="evidence" value="ECO:0007669"/>
    <property type="project" value="InterPro"/>
</dbReference>
<dbReference type="GO" id="GO:0009245">
    <property type="term" value="P:lipid A biosynthetic process"/>
    <property type="evidence" value="ECO:0007669"/>
    <property type="project" value="UniProtKB-UniRule"/>
</dbReference>
<dbReference type="GO" id="GO:0009103">
    <property type="term" value="P:lipopolysaccharide biosynthetic process"/>
    <property type="evidence" value="ECO:0007669"/>
    <property type="project" value="UniProtKB-UniRule"/>
</dbReference>
<dbReference type="FunFam" id="1.10.3730.20:FF:000002">
    <property type="entry name" value="Probable 4-amino-4-deoxy-L-arabinose-phosphoundecaprenol flippase subunit ArnE"/>
    <property type="match status" value="1"/>
</dbReference>
<dbReference type="Gene3D" id="1.10.3730.20">
    <property type="match status" value="1"/>
</dbReference>
<dbReference type="HAMAP" id="MF_01869">
    <property type="entry name" value="Flippase_ArnE"/>
    <property type="match status" value="1"/>
</dbReference>
<dbReference type="InterPro" id="IPR000620">
    <property type="entry name" value="EamA_dom"/>
</dbReference>
<dbReference type="InterPro" id="IPR022883">
    <property type="entry name" value="Flippase_ArnE"/>
</dbReference>
<dbReference type="InterPro" id="IPR000390">
    <property type="entry name" value="Small_drug/metabolite_transptr"/>
</dbReference>
<dbReference type="PANTHER" id="PTHR30561:SF23">
    <property type="entry name" value="4-AMINO-4-DEOXY-L-ARABINOSE-PHOSPHOUNDECAPRENOL FLIPPASE SUBUNIT ARNE-RELATED"/>
    <property type="match status" value="1"/>
</dbReference>
<dbReference type="PANTHER" id="PTHR30561">
    <property type="entry name" value="SMR FAMILY PROTON-DEPENDENT DRUG EFFLUX TRANSPORTER SUGE"/>
    <property type="match status" value="1"/>
</dbReference>
<dbReference type="Pfam" id="PF00892">
    <property type="entry name" value="EamA"/>
    <property type="match status" value="1"/>
</dbReference>
<dbReference type="SUPFAM" id="SSF103481">
    <property type="entry name" value="Multidrug resistance efflux transporter EmrE"/>
    <property type="match status" value="1"/>
</dbReference>
<reference key="1">
    <citation type="journal article" date="2006" name="Genome Biol.">
        <title>Genomic analysis reveals that Pseudomonas aeruginosa virulence is combinatorial.</title>
        <authorList>
            <person name="Lee D.G."/>
            <person name="Urbach J.M."/>
            <person name="Wu G."/>
            <person name="Liberati N.T."/>
            <person name="Feinbaum R.L."/>
            <person name="Miyata S."/>
            <person name="Diggins L.T."/>
            <person name="He J."/>
            <person name="Saucier M."/>
            <person name="Deziel E."/>
            <person name="Friedman L."/>
            <person name="Li L."/>
            <person name="Grills G."/>
            <person name="Montgomery K."/>
            <person name="Kucherlapati R."/>
            <person name="Rahme L.G."/>
            <person name="Ausubel F.M."/>
        </authorList>
    </citation>
    <scope>NUCLEOTIDE SEQUENCE [LARGE SCALE GENOMIC DNA]</scope>
    <source>
        <strain>UCBPP-PA14</strain>
    </source>
</reference>
<sequence>MSAALLLATLLMTGLGQVAQKLTVEHWRLVAADGWTARLRSPWPWLALLALGLGLLCWLLLLQRVEVGSAYPMLALNFVLVTLAARFVFDEPVDRRHLAGLLLIVAGVVLLGRSA</sequence>
<comment type="function">
    <text evidence="1">Translocates 4-amino-4-deoxy-L-arabinose-phosphoundecaprenol (alpha-L-Ara4N-phosphoundecaprenol) from the cytoplasmic to the periplasmic side of the inner membrane.</text>
</comment>
<comment type="pathway">
    <text evidence="1">Bacterial outer membrane biogenesis; lipopolysaccharide biosynthesis.</text>
</comment>
<comment type="subunit">
    <text evidence="1">Heterodimer of ArnE and ArnF.</text>
</comment>
<comment type="subcellular location">
    <subcellularLocation>
        <location evidence="1">Cell inner membrane</location>
        <topology evidence="1">Multi-pass membrane protein</topology>
    </subcellularLocation>
</comment>
<comment type="similarity">
    <text evidence="1">Belongs to the ArnE family.</text>
</comment>
<organism>
    <name type="scientific">Pseudomonas aeruginosa (strain UCBPP-PA14)</name>
    <dbReference type="NCBI Taxonomy" id="208963"/>
    <lineage>
        <taxon>Bacteria</taxon>
        <taxon>Pseudomonadati</taxon>
        <taxon>Pseudomonadota</taxon>
        <taxon>Gammaproteobacteria</taxon>
        <taxon>Pseudomonadales</taxon>
        <taxon>Pseudomonadaceae</taxon>
        <taxon>Pseudomonas</taxon>
    </lineage>
</organism>
<evidence type="ECO:0000255" key="1">
    <source>
        <dbReference type="HAMAP-Rule" id="MF_01869"/>
    </source>
</evidence>
<gene>
    <name evidence="1" type="primary">arnE</name>
    <name type="ordered locus">PA14_18320</name>
</gene>
<proteinExistence type="inferred from homology"/>
<keyword id="KW-0997">Cell inner membrane</keyword>
<keyword id="KW-1003">Cell membrane</keyword>
<keyword id="KW-0441">Lipid A biosynthesis</keyword>
<keyword id="KW-0444">Lipid biosynthesis</keyword>
<keyword id="KW-0443">Lipid metabolism</keyword>
<keyword id="KW-0448">Lipopolysaccharide biosynthesis</keyword>
<keyword id="KW-0472">Membrane</keyword>
<keyword id="KW-0812">Transmembrane</keyword>
<keyword id="KW-1133">Transmembrane helix</keyword>
<keyword id="KW-0813">Transport</keyword>
<protein>
    <recommendedName>
        <fullName evidence="1">Probable 4-amino-4-deoxy-L-arabinose-phosphoundecaprenol flippase subunit ArnE</fullName>
        <shortName evidence="1">L-Ara4N-phosphoundecaprenol flippase subunit ArnE</shortName>
    </recommendedName>
    <alternativeName>
        <fullName evidence="1">Undecaprenyl phosphate-aminoarabinose flippase subunit ArnE</fullName>
    </alternativeName>
</protein>
<feature type="chain" id="PRO_0000382984" description="Probable 4-amino-4-deoxy-L-arabinose-phosphoundecaprenol flippase subunit ArnE">
    <location>
        <begin position="1"/>
        <end position="115"/>
    </location>
</feature>
<feature type="transmembrane region" description="Helical" evidence="1">
    <location>
        <begin position="42"/>
        <end position="62"/>
    </location>
</feature>
<feature type="transmembrane region" description="Helical" evidence="1">
    <location>
        <begin position="65"/>
        <end position="85"/>
    </location>
</feature>
<feature type="transmembrane region" description="Helical" evidence="1">
    <location>
        <begin position="93"/>
        <end position="112"/>
    </location>
</feature>
<feature type="domain" description="EamA" evidence="1">
    <location>
        <begin position="46"/>
        <end position="113"/>
    </location>
</feature>